<name>PURQ_STAA8</name>
<accession>Q2FZJ1</accession>
<comment type="function">
    <text evidence="1">Part of the phosphoribosylformylglycinamidine synthase complex involved in the purines biosynthetic pathway. Catalyzes the ATP-dependent conversion of formylglycinamide ribonucleotide (FGAR) and glutamine to yield formylglycinamidine ribonucleotide (FGAM) and glutamate. The FGAM synthase complex is composed of three subunits. PurQ produces an ammonia molecule by converting glutamine to glutamate. PurL transfers the ammonia molecule to FGAR to form FGAM in an ATP-dependent manner. PurS interacts with PurQ and PurL and is thought to assist in the transfer of the ammonia molecule from PurQ to PurL.</text>
</comment>
<comment type="catalytic activity">
    <reaction evidence="1">
        <text>N(2)-formyl-N(1)-(5-phospho-beta-D-ribosyl)glycinamide + L-glutamine + ATP + H2O = 2-formamido-N(1)-(5-O-phospho-beta-D-ribosyl)acetamidine + L-glutamate + ADP + phosphate + H(+)</text>
        <dbReference type="Rhea" id="RHEA:17129"/>
        <dbReference type="ChEBI" id="CHEBI:15377"/>
        <dbReference type="ChEBI" id="CHEBI:15378"/>
        <dbReference type="ChEBI" id="CHEBI:29985"/>
        <dbReference type="ChEBI" id="CHEBI:30616"/>
        <dbReference type="ChEBI" id="CHEBI:43474"/>
        <dbReference type="ChEBI" id="CHEBI:58359"/>
        <dbReference type="ChEBI" id="CHEBI:147286"/>
        <dbReference type="ChEBI" id="CHEBI:147287"/>
        <dbReference type="ChEBI" id="CHEBI:456216"/>
        <dbReference type="EC" id="6.3.5.3"/>
    </reaction>
</comment>
<comment type="catalytic activity">
    <reaction evidence="1">
        <text>L-glutamine + H2O = L-glutamate + NH4(+)</text>
        <dbReference type="Rhea" id="RHEA:15889"/>
        <dbReference type="ChEBI" id="CHEBI:15377"/>
        <dbReference type="ChEBI" id="CHEBI:28938"/>
        <dbReference type="ChEBI" id="CHEBI:29985"/>
        <dbReference type="ChEBI" id="CHEBI:58359"/>
        <dbReference type="EC" id="3.5.1.2"/>
    </reaction>
</comment>
<comment type="pathway">
    <text evidence="1">Purine metabolism; IMP biosynthesis via de novo pathway; 5-amino-1-(5-phospho-D-ribosyl)imidazole from N(2)-formyl-N(1)-(5-phospho-D-ribosyl)glycinamide: step 1/2.</text>
</comment>
<comment type="subunit">
    <text evidence="1">Part of the FGAM synthase complex composed of 1 PurL, 1 PurQ and 2 PurS subunits.</text>
</comment>
<comment type="subcellular location">
    <subcellularLocation>
        <location evidence="1">Cytoplasm</location>
    </subcellularLocation>
</comment>
<keyword id="KW-0067">ATP-binding</keyword>
<keyword id="KW-0963">Cytoplasm</keyword>
<keyword id="KW-0315">Glutamine amidotransferase</keyword>
<keyword id="KW-0378">Hydrolase</keyword>
<keyword id="KW-0436">Ligase</keyword>
<keyword id="KW-0547">Nucleotide-binding</keyword>
<keyword id="KW-0658">Purine biosynthesis</keyword>
<keyword id="KW-1185">Reference proteome</keyword>
<proteinExistence type="inferred from homology"/>
<dbReference type="EC" id="6.3.5.3" evidence="1"/>
<dbReference type="EC" id="3.5.1.2" evidence="1"/>
<dbReference type="EMBL" id="CP000253">
    <property type="protein sequence ID" value="ABD30134.1"/>
    <property type="molecule type" value="Genomic_DNA"/>
</dbReference>
<dbReference type="RefSeq" id="WP_000666799.1">
    <property type="nucleotide sequence ID" value="NZ_LS483365.1"/>
</dbReference>
<dbReference type="RefSeq" id="YP_499562.1">
    <property type="nucleotide sequence ID" value="NC_007795.1"/>
</dbReference>
<dbReference type="SMR" id="Q2FZJ1"/>
<dbReference type="STRING" id="93061.SAOUHSC_01012"/>
<dbReference type="PaxDb" id="1280-SAXN108_1065"/>
<dbReference type="GeneID" id="3920273"/>
<dbReference type="KEGG" id="sao:SAOUHSC_01012"/>
<dbReference type="PATRIC" id="fig|93061.5.peg.927"/>
<dbReference type="eggNOG" id="COG0047">
    <property type="taxonomic scope" value="Bacteria"/>
</dbReference>
<dbReference type="HOGENOM" id="CLU_001031_3_1_9"/>
<dbReference type="OrthoDB" id="9804441at2"/>
<dbReference type="UniPathway" id="UPA00074">
    <property type="reaction ID" value="UER00128"/>
</dbReference>
<dbReference type="PRO" id="PR:Q2FZJ1"/>
<dbReference type="Proteomes" id="UP000008816">
    <property type="component" value="Chromosome"/>
</dbReference>
<dbReference type="GO" id="GO:0005737">
    <property type="term" value="C:cytoplasm"/>
    <property type="evidence" value="ECO:0007669"/>
    <property type="project" value="UniProtKB-SubCell"/>
</dbReference>
<dbReference type="GO" id="GO:0005524">
    <property type="term" value="F:ATP binding"/>
    <property type="evidence" value="ECO:0007669"/>
    <property type="project" value="UniProtKB-KW"/>
</dbReference>
<dbReference type="GO" id="GO:0004359">
    <property type="term" value="F:glutaminase activity"/>
    <property type="evidence" value="ECO:0007669"/>
    <property type="project" value="UniProtKB-EC"/>
</dbReference>
<dbReference type="GO" id="GO:0004642">
    <property type="term" value="F:phosphoribosylformylglycinamidine synthase activity"/>
    <property type="evidence" value="ECO:0007669"/>
    <property type="project" value="UniProtKB-UniRule"/>
</dbReference>
<dbReference type="GO" id="GO:0006189">
    <property type="term" value="P:'de novo' IMP biosynthetic process"/>
    <property type="evidence" value="ECO:0007669"/>
    <property type="project" value="UniProtKB-UniRule"/>
</dbReference>
<dbReference type="CDD" id="cd01740">
    <property type="entry name" value="GATase1_FGAR_AT"/>
    <property type="match status" value="1"/>
</dbReference>
<dbReference type="Gene3D" id="3.40.50.880">
    <property type="match status" value="1"/>
</dbReference>
<dbReference type="HAMAP" id="MF_00421">
    <property type="entry name" value="PurQ"/>
    <property type="match status" value="1"/>
</dbReference>
<dbReference type="InterPro" id="IPR029062">
    <property type="entry name" value="Class_I_gatase-like"/>
</dbReference>
<dbReference type="InterPro" id="IPR010075">
    <property type="entry name" value="PRibForGlyAmidine_synth_PurQ"/>
</dbReference>
<dbReference type="NCBIfam" id="TIGR01737">
    <property type="entry name" value="FGAM_synth_I"/>
    <property type="match status" value="1"/>
</dbReference>
<dbReference type="NCBIfam" id="NF002957">
    <property type="entry name" value="PRK03619.1"/>
    <property type="match status" value="1"/>
</dbReference>
<dbReference type="PANTHER" id="PTHR47552">
    <property type="entry name" value="PHOSPHORIBOSYLFORMYLGLYCINAMIDINE SYNTHASE SUBUNIT PURQ"/>
    <property type="match status" value="1"/>
</dbReference>
<dbReference type="PANTHER" id="PTHR47552:SF1">
    <property type="entry name" value="PHOSPHORIBOSYLFORMYLGLYCINAMIDINE SYNTHASE SUBUNIT PURQ"/>
    <property type="match status" value="1"/>
</dbReference>
<dbReference type="Pfam" id="PF13507">
    <property type="entry name" value="GATase_5"/>
    <property type="match status" value="1"/>
</dbReference>
<dbReference type="PIRSF" id="PIRSF001586">
    <property type="entry name" value="FGAM_synth_I"/>
    <property type="match status" value="1"/>
</dbReference>
<dbReference type="SMART" id="SM01211">
    <property type="entry name" value="GATase_5"/>
    <property type="match status" value="1"/>
</dbReference>
<dbReference type="SUPFAM" id="SSF52317">
    <property type="entry name" value="Class I glutamine amidotransferase-like"/>
    <property type="match status" value="1"/>
</dbReference>
<dbReference type="PROSITE" id="PS51273">
    <property type="entry name" value="GATASE_TYPE_1"/>
    <property type="match status" value="1"/>
</dbReference>
<protein>
    <recommendedName>
        <fullName evidence="1">Phosphoribosylformylglycinamidine synthase subunit PurQ</fullName>
        <shortName evidence="1">FGAM synthase</shortName>
        <ecNumber evidence="1">6.3.5.3</ecNumber>
    </recommendedName>
    <alternativeName>
        <fullName evidence="1">Formylglycinamide ribonucleotide amidotransferase subunit I</fullName>
        <shortName evidence="1">FGAR amidotransferase I</shortName>
        <shortName evidence="1">FGAR-AT I</shortName>
    </alternativeName>
    <alternativeName>
        <fullName evidence="1">Glutaminase PurQ</fullName>
        <ecNumber evidence="1">3.5.1.2</ecNumber>
    </alternativeName>
    <alternativeName>
        <fullName evidence="1">Phosphoribosylformylglycinamidine synthase subunit I</fullName>
    </alternativeName>
</protein>
<feature type="chain" id="PRO_0000252733" description="Phosphoribosylformylglycinamidine synthase subunit PurQ">
    <location>
        <begin position="1"/>
        <end position="223"/>
    </location>
</feature>
<feature type="domain" description="Glutamine amidotransferase type-1" evidence="1">
    <location>
        <begin position="3"/>
        <end position="223"/>
    </location>
</feature>
<feature type="active site" description="Nucleophile" evidence="1">
    <location>
        <position position="85"/>
    </location>
</feature>
<feature type="active site" evidence="1">
    <location>
        <position position="193"/>
    </location>
</feature>
<feature type="active site" evidence="1">
    <location>
        <position position="195"/>
    </location>
</feature>
<gene>
    <name evidence="1" type="primary">purQ</name>
    <name type="ordered locus">SAOUHSC_01012</name>
</gene>
<reference key="1">
    <citation type="book" date="2006" name="Gram positive pathogens, 2nd edition">
        <title>The Staphylococcus aureus NCTC 8325 genome.</title>
        <editorList>
            <person name="Fischetti V."/>
            <person name="Novick R."/>
            <person name="Ferretti J."/>
            <person name="Portnoy D."/>
            <person name="Rood J."/>
        </editorList>
        <authorList>
            <person name="Gillaspy A.F."/>
            <person name="Worrell V."/>
            <person name="Orvis J."/>
            <person name="Roe B.A."/>
            <person name="Dyer D.W."/>
            <person name="Iandolo J.J."/>
        </authorList>
    </citation>
    <scope>NUCLEOTIDE SEQUENCE [LARGE SCALE GENOMIC DNA]</scope>
    <source>
        <strain>NCTC 8325 / PS 47</strain>
    </source>
</reference>
<organism>
    <name type="scientific">Staphylococcus aureus (strain NCTC 8325 / PS 47)</name>
    <dbReference type="NCBI Taxonomy" id="93061"/>
    <lineage>
        <taxon>Bacteria</taxon>
        <taxon>Bacillati</taxon>
        <taxon>Bacillota</taxon>
        <taxon>Bacilli</taxon>
        <taxon>Bacillales</taxon>
        <taxon>Staphylococcaceae</taxon>
        <taxon>Staphylococcus</taxon>
    </lineage>
</organism>
<sequence>MKFAVLVFPGSNCDRDMFNAAIKSGVEAEYVDYRETSLSGFDGVLIPGGFSFGDYLRSGAMASVAPIISEVKRLAAEGKPVLGVCNGFQILTEIGLLPGALLHNDSHLFISRNEELEIVNNQTAFTNLYEQGEKVIYPVAHGEGHYYCTDEIYQQLKANNQIILKYVNNPNGSYDDIAGIVNEKGNVCGMMPHPERALETLLGTDSGVKLFEAMVKSWREQHV</sequence>
<evidence type="ECO:0000255" key="1">
    <source>
        <dbReference type="HAMAP-Rule" id="MF_00421"/>
    </source>
</evidence>